<protein>
    <recommendedName>
        <fullName>Bombyxin F-1</fullName>
        <shortName>BBX-F1</shortName>
    </recommendedName>
    <component>
        <recommendedName>
            <fullName>Bombyxin F-1 B chain</fullName>
        </recommendedName>
    </component>
    <component>
        <recommendedName>
            <fullName>Bombyxin F-1 A chain</fullName>
        </recommendedName>
    </component>
</protein>
<accession>P91896</accession>
<accession>P91897</accession>
<keyword id="KW-0165">Cleavage on pair of basic residues</keyword>
<keyword id="KW-1015">Disulfide bond</keyword>
<keyword id="KW-0372">Hormone</keyword>
<keyword id="KW-1185">Reference proteome</keyword>
<keyword id="KW-0964">Secreted</keyword>
<keyword id="KW-0732">Signal</keyword>
<gene>
    <name type="primary">BBXF1</name>
</gene>
<reference key="1">
    <citation type="journal article" date="1997" name="Zool. Sci.">
        <title>Bombyxin F1 gene: structure and expression of a new bombyxin family gene that forms a pair with bombyxin B10 gene.</title>
        <authorList>
            <person name="Yoshida I."/>
            <person name="Tsuzuki S."/>
            <person name="Abdel Salam S."/>
            <person name="Ino M."/>
            <person name="Korayem A.M."/>
            <person name="Sakurai S."/>
            <person name="Iwami M."/>
        </authorList>
    </citation>
    <scope>NUCLEOTIDE SEQUENCE [GENOMIC DNA]</scope>
    <source>
        <strain>Kinshu</strain>
        <strain>Showa</strain>
    </source>
</reference>
<evidence type="ECO:0000250" key="1"/>
<evidence type="ECO:0000255" key="2"/>
<evidence type="ECO:0000305" key="3"/>
<organism>
    <name type="scientific">Bombyx mori</name>
    <name type="common">Silk moth</name>
    <dbReference type="NCBI Taxonomy" id="7091"/>
    <lineage>
        <taxon>Eukaryota</taxon>
        <taxon>Metazoa</taxon>
        <taxon>Ecdysozoa</taxon>
        <taxon>Arthropoda</taxon>
        <taxon>Hexapoda</taxon>
        <taxon>Insecta</taxon>
        <taxon>Pterygota</taxon>
        <taxon>Neoptera</taxon>
        <taxon>Endopterygota</taxon>
        <taxon>Lepidoptera</taxon>
        <taxon>Glossata</taxon>
        <taxon>Ditrysia</taxon>
        <taxon>Bombycoidea</taxon>
        <taxon>Bombycidae</taxon>
        <taxon>Bombycinae</taxon>
        <taxon>Bombyx</taxon>
    </lineage>
</organism>
<name>BXF1_BOMMO</name>
<proteinExistence type="inferred from homology"/>
<dbReference type="EMBL" id="AB001049">
    <property type="protein sequence ID" value="BAA19223.1"/>
    <property type="molecule type" value="Genomic_DNA"/>
</dbReference>
<dbReference type="EMBL" id="AB001050">
    <property type="protein sequence ID" value="BAA19224.1"/>
    <property type="molecule type" value="Genomic_DNA"/>
</dbReference>
<dbReference type="RefSeq" id="NP_001119734.1">
    <property type="nucleotide sequence ID" value="NM_001126262.1"/>
</dbReference>
<dbReference type="FunCoup" id="P91896">
    <property type="interactions" value="162"/>
</dbReference>
<dbReference type="STRING" id="7091.P91896"/>
<dbReference type="PaxDb" id="7091-BGIBMGA011930-TA"/>
<dbReference type="EnsemblMetazoa" id="NM_001126262.1">
    <property type="protein sequence ID" value="NP_001119734.1"/>
    <property type="gene ID" value="GeneID_100146110"/>
</dbReference>
<dbReference type="GeneID" id="100146110"/>
<dbReference type="KEGG" id="bmor:100146110"/>
<dbReference type="CTD" id="100146110"/>
<dbReference type="HOGENOM" id="CLU_125164_2_0_1"/>
<dbReference type="InParanoid" id="P91896"/>
<dbReference type="OrthoDB" id="493443at7088"/>
<dbReference type="Proteomes" id="UP000005204">
    <property type="component" value="Unassembled WGS sequence"/>
</dbReference>
<dbReference type="GO" id="GO:0005615">
    <property type="term" value="C:extracellular space"/>
    <property type="evidence" value="ECO:0007669"/>
    <property type="project" value="InterPro"/>
</dbReference>
<dbReference type="GO" id="GO:0008083">
    <property type="term" value="F:growth factor activity"/>
    <property type="evidence" value="ECO:0007669"/>
    <property type="project" value="InterPro"/>
</dbReference>
<dbReference type="GO" id="GO:0005179">
    <property type="term" value="F:hormone activity"/>
    <property type="evidence" value="ECO:0007669"/>
    <property type="project" value="UniProtKB-KW"/>
</dbReference>
<dbReference type="CDD" id="cd04366">
    <property type="entry name" value="IlGF_insulin_bombyxin_like"/>
    <property type="match status" value="1"/>
</dbReference>
<dbReference type="Gene3D" id="1.10.100.10">
    <property type="entry name" value="Insulin-like"/>
    <property type="match status" value="1"/>
</dbReference>
<dbReference type="InterPro" id="IPR017097">
    <property type="entry name" value="Bombyxin"/>
</dbReference>
<dbReference type="InterPro" id="IPR016179">
    <property type="entry name" value="Insulin-like"/>
</dbReference>
<dbReference type="InterPro" id="IPR036438">
    <property type="entry name" value="Insulin-like_sf"/>
</dbReference>
<dbReference type="InterPro" id="IPR022353">
    <property type="entry name" value="Insulin_CS"/>
</dbReference>
<dbReference type="InterPro" id="IPR022352">
    <property type="entry name" value="Insulin_family"/>
</dbReference>
<dbReference type="PANTHER" id="PTHR13647:SF4">
    <property type="entry name" value="INSULIN-LIKE PEPTIDE 1-RELATED"/>
    <property type="match status" value="1"/>
</dbReference>
<dbReference type="PANTHER" id="PTHR13647">
    <property type="entry name" value="INSULIN-LIKE PEPTIDE 2-RELATED"/>
    <property type="match status" value="1"/>
</dbReference>
<dbReference type="Pfam" id="PF00049">
    <property type="entry name" value="Insulin"/>
    <property type="match status" value="1"/>
</dbReference>
<dbReference type="PIRSF" id="PIRSF037038">
    <property type="entry name" value="Bombyxin"/>
    <property type="match status" value="1"/>
</dbReference>
<dbReference type="PRINTS" id="PR00276">
    <property type="entry name" value="INSULINFAMLY"/>
</dbReference>
<dbReference type="SMART" id="SM00078">
    <property type="entry name" value="IlGF"/>
    <property type="match status" value="1"/>
</dbReference>
<dbReference type="SUPFAM" id="SSF56994">
    <property type="entry name" value="Insulin-like"/>
    <property type="match status" value="1"/>
</dbReference>
<dbReference type="PROSITE" id="PS00262">
    <property type="entry name" value="INSULIN"/>
    <property type="match status" value="1"/>
</dbReference>
<comment type="subunit">
    <text evidence="1">Heterodimer of a B chain and an A chain linked by two disulfide bonds.</text>
</comment>
<comment type="subcellular location">
    <subcellularLocation>
        <location>Secreted</location>
    </subcellularLocation>
</comment>
<comment type="similarity">
    <text evidence="3">Belongs to the insulin family.</text>
</comment>
<sequence>MKLVVIVLLVISVSILVSAQELGGSRRYCGRHLAQTMAVLCWGIDEMSAEKRNSDMVYEDSGMPELLPADTRKKRGIIDECCLQACTRDVLLSYC</sequence>
<feature type="signal peptide" evidence="2">
    <location>
        <begin position="1"/>
        <end position="19"/>
    </location>
</feature>
<feature type="peptide" id="PRO_0000016037" description="Bombyxin F-1 B chain">
    <location>
        <begin position="20"/>
        <end position="50"/>
    </location>
</feature>
<feature type="propeptide" id="PRO_0000016038" description="C peptide like">
    <location>
        <begin position="53"/>
        <end position="71"/>
    </location>
</feature>
<feature type="peptide" id="PRO_0000016039" description="Bombyxin F-1 A chain">
    <location>
        <begin position="76"/>
        <end position="95"/>
    </location>
</feature>
<feature type="disulfide bond" description="Interchain (between B and A chains)" evidence="1">
    <location>
        <begin position="29"/>
        <end position="82"/>
    </location>
</feature>
<feature type="disulfide bond" description="Interchain (between B and A chains)" evidence="1">
    <location>
        <begin position="41"/>
        <end position="95"/>
    </location>
</feature>
<feature type="disulfide bond" evidence="1">
    <location>
        <begin position="81"/>
        <end position="86"/>
    </location>
</feature>
<feature type="sequence variant" description="In strain: Showa.">
    <original>T</original>
    <variation>A</variation>
    <location>
        <position position="71"/>
    </location>
</feature>